<accession>B3PDL7</accession>
<feature type="chain" id="PRO_1000124942" description="Nucleoside diphosphate kinase">
    <location>
        <begin position="1"/>
        <end position="141"/>
    </location>
</feature>
<feature type="active site" description="Pros-phosphohistidine intermediate" evidence="1">
    <location>
        <position position="117"/>
    </location>
</feature>
<feature type="binding site" evidence="1">
    <location>
        <position position="11"/>
    </location>
    <ligand>
        <name>ATP</name>
        <dbReference type="ChEBI" id="CHEBI:30616"/>
    </ligand>
</feature>
<feature type="binding site" evidence="1">
    <location>
        <position position="59"/>
    </location>
    <ligand>
        <name>ATP</name>
        <dbReference type="ChEBI" id="CHEBI:30616"/>
    </ligand>
</feature>
<feature type="binding site" evidence="1">
    <location>
        <position position="87"/>
    </location>
    <ligand>
        <name>ATP</name>
        <dbReference type="ChEBI" id="CHEBI:30616"/>
    </ligand>
</feature>
<feature type="binding site" evidence="1">
    <location>
        <position position="93"/>
    </location>
    <ligand>
        <name>ATP</name>
        <dbReference type="ChEBI" id="CHEBI:30616"/>
    </ligand>
</feature>
<feature type="binding site" evidence="1">
    <location>
        <position position="104"/>
    </location>
    <ligand>
        <name>ATP</name>
        <dbReference type="ChEBI" id="CHEBI:30616"/>
    </ligand>
</feature>
<feature type="binding site" evidence="1">
    <location>
        <position position="114"/>
    </location>
    <ligand>
        <name>ATP</name>
        <dbReference type="ChEBI" id="CHEBI:30616"/>
    </ligand>
</feature>
<name>NDK_CELJU</name>
<organism>
    <name type="scientific">Cellvibrio japonicus (strain Ueda107)</name>
    <name type="common">Pseudomonas fluorescens subsp. cellulosa</name>
    <dbReference type="NCBI Taxonomy" id="498211"/>
    <lineage>
        <taxon>Bacteria</taxon>
        <taxon>Pseudomonadati</taxon>
        <taxon>Pseudomonadota</taxon>
        <taxon>Gammaproteobacteria</taxon>
        <taxon>Cellvibrionales</taxon>
        <taxon>Cellvibrionaceae</taxon>
        <taxon>Cellvibrio</taxon>
    </lineage>
</organism>
<proteinExistence type="inferred from homology"/>
<reference key="1">
    <citation type="journal article" date="2008" name="J. Bacteriol.">
        <title>Insights into plant cell wall degradation from the genome sequence of the soil bacterium Cellvibrio japonicus.</title>
        <authorList>
            <person name="DeBoy R.T."/>
            <person name="Mongodin E.F."/>
            <person name="Fouts D.E."/>
            <person name="Tailford L.E."/>
            <person name="Khouri H."/>
            <person name="Emerson J.B."/>
            <person name="Mohamoud Y."/>
            <person name="Watkins K."/>
            <person name="Henrissat B."/>
            <person name="Gilbert H.J."/>
            <person name="Nelson K.E."/>
        </authorList>
    </citation>
    <scope>NUCLEOTIDE SEQUENCE [LARGE SCALE GENOMIC DNA]</scope>
    <source>
        <strain>Ueda107</strain>
    </source>
</reference>
<sequence>MAVEQTFSIIKPDAVKNNHIGAIVARFEKAGLKVIAQRMLQLTPAQAEGFYAEHKGRSFYDELVAFMTSGPVVVQVLYGENAIALNRELMGATDPTKAAPGTIRADFSMSMPANAVHGSDSPISAAREIAYFFPTHEVVVR</sequence>
<evidence type="ECO:0000255" key="1">
    <source>
        <dbReference type="HAMAP-Rule" id="MF_00451"/>
    </source>
</evidence>
<keyword id="KW-0067">ATP-binding</keyword>
<keyword id="KW-0963">Cytoplasm</keyword>
<keyword id="KW-0418">Kinase</keyword>
<keyword id="KW-0460">Magnesium</keyword>
<keyword id="KW-0479">Metal-binding</keyword>
<keyword id="KW-0546">Nucleotide metabolism</keyword>
<keyword id="KW-0547">Nucleotide-binding</keyword>
<keyword id="KW-0597">Phosphoprotein</keyword>
<keyword id="KW-1185">Reference proteome</keyword>
<keyword id="KW-0808">Transferase</keyword>
<dbReference type="EC" id="2.7.4.6" evidence="1"/>
<dbReference type="EMBL" id="CP000934">
    <property type="protein sequence ID" value="ACE83183.1"/>
    <property type="molecule type" value="Genomic_DNA"/>
</dbReference>
<dbReference type="RefSeq" id="WP_012487107.1">
    <property type="nucleotide sequence ID" value="NC_010995.1"/>
</dbReference>
<dbReference type="SMR" id="B3PDL7"/>
<dbReference type="STRING" id="498211.CJA_1477"/>
<dbReference type="KEGG" id="cja:CJA_1477"/>
<dbReference type="eggNOG" id="COG0105">
    <property type="taxonomic scope" value="Bacteria"/>
</dbReference>
<dbReference type="HOGENOM" id="CLU_060216_8_1_6"/>
<dbReference type="OrthoDB" id="9801161at2"/>
<dbReference type="Proteomes" id="UP000001036">
    <property type="component" value="Chromosome"/>
</dbReference>
<dbReference type="GO" id="GO:0005737">
    <property type="term" value="C:cytoplasm"/>
    <property type="evidence" value="ECO:0007669"/>
    <property type="project" value="UniProtKB-SubCell"/>
</dbReference>
<dbReference type="GO" id="GO:0005524">
    <property type="term" value="F:ATP binding"/>
    <property type="evidence" value="ECO:0007669"/>
    <property type="project" value="UniProtKB-UniRule"/>
</dbReference>
<dbReference type="GO" id="GO:0046872">
    <property type="term" value="F:metal ion binding"/>
    <property type="evidence" value="ECO:0007669"/>
    <property type="project" value="UniProtKB-KW"/>
</dbReference>
<dbReference type="GO" id="GO:0004550">
    <property type="term" value="F:nucleoside diphosphate kinase activity"/>
    <property type="evidence" value="ECO:0007669"/>
    <property type="project" value="UniProtKB-UniRule"/>
</dbReference>
<dbReference type="GO" id="GO:0006241">
    <property type="term" value="P:CTP biosynthetic process"/>
    <property type="evidence" value="ECO:0007669"/>
    <property type="project" value="UniProtKB-UniRule"/>
</dbReference>
<dbReference type="GO" id="GO:0006183">
    <property type="term" value="P:GTP biosynthetic process"/>
    <property type="evidence" value="ECO:0007669"/>
    <property type="project" value="UniProtKB-UniRule"/>
</dbReference>
<dbReference type="GO" id="GO:0006228">
    <property type="term" value="P:UTP biosynthetic process"/>
    <property type="evidence" value="ECO:0007669"/>
    <property type="project" value="UniProtKB-UniRule"/>
</dbReference>
<dbReference type="CDD" id="cd04413">
    <property type="entry name" value="NDPk_I"/>
    <property type="match status" value="1"/>
</dbReference>
<dbReference type="FunFam" id="3.30.70.141:FF:000001">
    <property type="entry name" value="Nucleoside diphosphate kinase"/>
    <property type="match status" value="1"/>
</dbReference>
<dbReference type="Gene3D" id="3.30.70.141">
    <property type="entry name" value="Nucleoside diphosphate kinase-like domain"/>
    <property type="match status" value="1"/>
</dbReference>
<dbReference type="HAMAP" id="MF_00451">
    <property type="entry name" value="NDP_kinase"/>
    <property type="match status" value="1"/>
</dbReference>
<dbReference type="InterPro" id="IPR034907">
    <property type="entry name" value="NDK-like_dom"/>
</dbReference>
<dbReference type="InterPro" id="IPR036850">
    <property type="entry name" value="NDK-like_dom_sf"/>
</dbReference>
<dbReference type="InterPro" id="IPR001564">
    <property type="entry name" value="Nucleoside_diP_kinase"/>
</dbReference>
<dbReference type="InterPro" id="IPR023005">
    <property type="entry name" value="Nucleoside_diP_kinase_AS"/>
</dbReference>
<dbReference type="NCBIfam" id="NF001908">
    <property type="entry name" value="PRK00668.1"/>
    <property type="match status" value="1"/>
</dbReference>
<dbReference type="PANTHER" id="PTHR46161">
    <property type="entry name" value="NUCLEOSIDE DIPHOSPHATE KINASE"/>
    <property type="match status" value="1"/>
</dbReference>
<dbReference type="PANTHER" id="PTHR46161:SF3">
    <property type="entry name" value="NUCLEOSIDE DIPHOSPHATE KINASE DDB_G0292928-RELATED"/>
    <property type="match status" value="1"/>
</dbReference>
<dbReference type="Pfam" id="PF00334">
    <property type="entry name" value="NDK"/>
    <property type="match status" value="1"/>
</dbReference>
<dbReference type="PRINTS" id="PR01243">
    <property type="entry name" value="NUCDPKINASE"/>
</dbReference>
<dbReference type="SMART" id="SM00562">
    <property type="entry name" value="NDK"/>
    <property type="match status" value="1"/>
</dbReference>
<dbReference type="SUPFAM" id="SSF54919">
    <property type="entry name" value="Nucleoside diphosphate kinase, NDK"/>
    <property type="match status" value="1"/>
</dbReference>
<dbReference type="PROSITE" id="PS00469">
    <property type="entry name" value="NDPK"/>
    <property type="match status" value="1"/>
</dbReference>
<dbReference type="PROSITE" id="PS51374">
    <property type="entry name" value="NDPK_LIKE"/>
    <property type="match status" value="1"/>
</dbReference>
<comment type="function">
    <text evidence="1">Major role in the synthesis of nucleoside triphosphates other than ATP. The ATP gamma phosphate is transferred to the NDP beta phosphate via a ping-pong mechanism, using a phosphorylated active-site intermediate.</text>
</comment>
<comment type="catalytic activity">
    <reaction evidence="1">
        <text>a 2'-deoxyribonucleoside 5'-diphosphate + ATP = a 2'-deoxyribonucleoside 5'-triphosphate + ADP</text>
        <dbReference type="Rhea" id="RHEA:44640"/>
        <dbReference type="ChEBI" id="CHEBI:30616"/>
        <dbReference type="ChEBI" id="CHEBI:61560"/>
        <dbReference type="ChEBI" id="CHEBI:73316"/>
        <dbReference type="ChEBI" id="CHEBI:456216"/>
        <dbReference type="EC" id="2.7.4.6"/>
    </reaction>
</comment>
<comment type="catalytic activity">
    <reaction evidence="1">
        <text>a ribonucleoside 5'-diphosphate + ATP = a ribonucleoside 5'-triphosphate + ADP</text>
        <dbReference type="Rhea" id="RHEA:18113"/>
        <dbReference type="ChEBI" id="CHEBI:30616"/>
        <dbReference type="ChEBI" id="CHEBI:57930"/>
        <dbReference type="ChEBI" id="CHEBI:61557"/>
        <dbReference type="ChEBI" id="CHEBI:456216"/>
        <dbReference type="EC" id="2.7.4.6"/>
    </reaction>
</comment>
<comment type="cofactor">
    <cofactor evidence="1">
        <name>Mg(2+)</name>
        <dbReference type="ChEBI" id="CHEBI:18420"/>
    </cofactor>
</comment>
<comment type="subunit">
    <text evidence="1">Homotetramer.</text>
</comment>
<comment type="subcellular location">
    <subcellularLocation>
        <location evidence="1">Cytoplasm</location>
    </subcellularLocation>
</comment>
<comment type="similarity">
    <text evidence="1">Belongs to the NDK family.</text>
</comment>
<gene>
    <name evidence="1" type="primary">ndk</name>
    <name type="ordered locus">CJA_1477</name>
</gene>
<protein>
    <recommendedName>
        <fullName evidence="1">Nucleoside diphosphate kinase</fullName>
        <shortName evidence="1">NDK</shortName>
        <shortName evidence="1">NDP kinase</shortName>
        <ecNumber evidence="1">2.7.4.6</ecNumber>
    </recommendedName>
    <alternativeName>
        <fullName evidence="1">Nucleoside-2-P kinase</fullName>
    </alternativeName>
</protein>